<comment type="function">
    <text>Involved in cell wall beta(1-&gt;6) glucan synthesis.</text>
</comment>
<comment type="subcellular location">
    <subcellularLocation>
        <location evidence="2">Secreted</location>
        <location evidence="2">Cell wall</location>
    </subcellularLocation>
</comment>
<comment type="PTM">
    <text>O-glycosylated.</text>
</comment>
<comment type="similarity">
    <text evidence="2">Belongs to the KRE9/KNH1 family.</text>
</comment>
<sequence length="268" mass="29753">MLIVLFLTLFCSVVFRTAYCDVAIVAPEPNSVYDLSGTSQAVVKVKWMHTDNTPQEKDFVRYTFTLCSGTNAMIEAMATLQTLSASDLTDNEFNAIIENTVGTDGVYFIQVFAQTAIGYTIHYTNRFKLKGMIGTKAANPSMITIAPEAQTRITTGDVGATIDSKSFTVPYNLQTGVVKYAPMQLQPATKVTAKTWKRKYATSEVTYYYTLRNSVDQHTTVTPGWSYIITADSNYATPAPMPADNGGWYNPRKRLSLTARKVNALRHR</sequence>
<protein>
    <recommendedName>
        <fullName>Cell wall synthesis protein KNH1</fullName>
    </recommendedName>
</protein>
<gene>
    <name type="primary">KNH1</name>
    <name type="ordered locus">YDL049C</name>
</gene>
<dbReference type="EMBL" id="U31538">
    <property type="protein sequence ID" value="AAC49530.1"/>
    <property type="molecule type" value="Genomic_DNA"/>
</dbReference>
<dbReference type="EMBL" id="Z74097">
    <property type="protein sequence ID" value="CAA98611.1"/>
    <property type="molecule type" value="Genomic_DNA"/>
</dbReference>
<dbReference type="EMBL" id="BK006938">
    <property type="protein sequence ID" value="DAA11806.1"/>
    <property type="molecule type" value="Genomic_DNA"/>
</dbReference>
<dbReference type="PIR" id="S67583">
    <property type="entry name" value="S67583"/>
</dbReference>
<dbReference type="RefSeq" id="NP_010234.1">
    <property type="nucleotide sequence ID" value="NM_001180108.1"/>
</dbReference>
<dbReference type="BioGRID" id="32009">
    <property type="interactions" value="61"/>
</dbReference>
<dbReference type="DIP" id="DIP-4996N"/>
<dbReference type="FunCoup" id="P50112">
    <property type="interactions" value="83"/>
</dbReference>
<dbReference type="IntAct" id="P50112">
    <property type="interactions" value="5"/>
</dbReference>
<dbReference type="STRING" id="4932.YDL049C"/>
<dbReference type="GlyGen" id="P50112">
    <property type="glycosylation" value="2 sites"/>
</dbReference>
<dbReference type="PaxDb" id="4932-YDL049C"/>
<dbReference type="PeptideAtlas" id="P50112"/>
<dbReference type="EnsemblFungi" id="YDL049C_mRNA">
    <property type="protein sequence ID" value="YDL049C"/>
    <property type="gene ID" value="YDL049C"/>
</dbReference>
<dbReference type="GeneID" id="851511"/>
<dbReference type="KEGG" id="sce:YDL049C"/>
<dbReference type="AGR" id="SGD:S000002207"/>
<dbReference type="SGD" id="S000002207">
    <property type="gene designation" value="KNH1"/>
</dbReference>
<dbReference type="VEuPathDB" id="FungiDB:YDL049C"/>
<dbReference type="eggNOG" id="ENOG502S28F">
    <property type="taxonomic scope" value="Eukaryota"/>
</dbReference>
<dbReference type="GeneTree" id="ENSGT00940000176711"/>
<dbReference type="HOGENOM" id="CLU_063732_1_0_1"/>
<dbReference type="InParanoid" id="P50112"/>
<dbReference type="OMA" id="YYYFQIY"/>
<dbReference type="OrthoDB" id="2432613at2759"/>
<dbReference type="BioCyc" id="YEAST:G3O-29468-MONOMER"/>
<dbReference type="BioGRID-ORCS" id="851511">
    <property type="hits" value="1 hit in 10 CRISPR screens"/>
</dbReference>
<dbReference type="PRO" id="PR:P50112"/>
<dbReference type="Proteomes" id="UP000002311">
    <property type="component" value="Chromosome IV"/>
</dbReference>
<dbReference type="RNAct" id="P50112">
    <property type="molecule type" value="protein"/>
</dbReference>
<dbReference type="GO" id="GO:0005576">
    <property type="term" value="C:extracellular region"/>
    <property type="evidence" value="ECO:0000314"/>
    <property type="project" value="SGD"/>
</dbReference>
<dbReference type="GO" id="GO:0000324">
    <property type="term" value="C:fungal-type vacuole"/>
    <property type="evidence" value="ECO:0007005"/>
    <property type="project" value="SGD"/>
</dbReference>
<dbReference type="GO" id="GO:0006078">
    <property type="term" value="P:(1-&gt;6)-beta-D-glucan biosynthetic process"/>
    <property type="evidence" value="ECO:0000315"/>
    <property type="project" value="SGD"/>
</dbReference>
<dbReference type="GO" id="GO:0042546">
    <property type="term" value="P:cell wall biogenesis"/>
    <property type="evidence" value="ECO:0007669"/>
    <property type="project" value="InterPro"/>
</dbReference>
<dbReference type="GO" id="GO:0031505">
    <property type="term" value="P:fungal-type cell wall organization"/>
    <property type="evidence" value="ECO:0000318"/>
    <property type="project" value="GO_Central"/>
</dbReference>
<dbReference type="InterPro" id="IPR045328">
    <property type="entry name" value="Kre9/Knh1"/>
</dbReference>
<dbReference type="InterPro" id="IPR018466">
    <property type="entry name" value="Kre9/Knh1-like_N"/>
</dbReference>
<dbReference type="InterPro" id="IPR008659">
    <property type="entry name" value="Kre9/Knh1_C"/>
</dbReference>
<dbReference type="PANTHER" id="PTHR28154">
    <property type="entry name" value="CELL WALL SYNTHESIS PROTEIN KNH1-RELATED"/>
    <property type="match status" value="1"/>
</dbReference>
<dbReference type="PANTHER" id="PTHR28154:SF1">
    <property type="entry name" value="CELL WALL SYNTHESIS PROTEIN KNH1-RELATED"/>
    <property type="match status" value="1"/>
</dbReference>
<dbReference type="Pfam" id="PF10342">
    <property type="entry name" value="Kre9_KNH"/>
    <property type="match status" value="1"/>
</dbReference>
<dbReference type="Pfam" id="PF05390">
    <property type="entry name" value="Kre9_KNH1_C"/>
    <property type="match status" value="1"/>
</dbReference>
<evidence type="ECO:0000255" key="1"/>
<evidence type="ECO:0000305" key="2"/>
<feature type="signal peptide" evidence="1">
    <location>
        <begin position="1"/>
        <end position="20"/>
    </location>
</feature>
<feature type="chain" id="PRO_0000016851" description="Cell wall synthesis protein KNH1">
    <location>
        <begin position="21"/>
        <end position="268"/>
    </location>
</feature>
<feature type="sequence conflict" description="In Ref. 1." evidence="2" ref="1">
    <location>
        <position position="238"/>
    </location>
</feature>
<proteinExistence type="inferred from homology"/>
<keyword id="KW-0134">Cell wall</keyword>
<keyword id="KW-0961">Cell wall biogenesis/degradation</keyword>
<keyword id="KW-0325">Glycoprotein</keyword>
<keyword id="KW-1185">Reference proteome</keyword>
<keyword id="KW-0964">Secreted</keyword>
<keyword id="KW-0732">Signal</keyword>
<reference key="1">
    <citation type="journal article" date="1996" name="Yeast">
        <title>The KNH1 gene of Saccharomyces cerevisiae is a functional homolog of KRE9.</title>
        <authorList>
            <person name="Dijkgraaf G.J.P."/>
            <person name="Brown J.L."/>
            <person name="Bussey H."/>
        </authorList>
    </citation>
    <scope>NUCLEOTIDE SEQUENCE [GENOMIC DNA]</scope>
</reference>
<reference key="2">
    <citation type="journal article" date="1997" name="Nature">
        <title>The nucleotide sequence of Saccharomyces cerevisiae chromosome IV.</title>
        <authorList>
            <person name="Jacq C."/>
            <person name="Alt-Moerbe J."/>
            <person name="Andre B."/>
            <person name="Arnold W."/>
            <person name="Bahr A."/>
            <person name="Ballesta J.P.G."/>
            <person name="Bargues M."/>
            <person name="Baron L."/>
            <person name="Becker A."/>
            <person name="Biteau N."/>
            <person name="Bloecker H."/>
            <person name="Blugeon C."/>
            <person name="Boskovic J."/>
            <person name="Brandt P."/>
            <person name="Brueckner M."/>
            <person name="Buitrago M.J."/>
            <person name="Coster F."/>
            <person name="Delaveau T."/>
            <person name="del Rey F."/>
            <person name="Dujon B."/>
            <person name="Eide L.G."/>
            <person name="Garcia-Cantalejo J.M."/>
            <person name="Goffeau A."/>
            <person name="Gomez-Peris A."/>
            <person name="Granotier C."/>
            <person name="Hanemann V."/>
            <person name="Hankeln T."/>
            <person name="Hoheisel J.D."/>
            <person name="Jaeger W."/>
            <person name="Jimenez A."/>
            <person name="Jonniaux J.-L."/>
            <person name="Kraemer C."/>
            <person name="Kuester H."/>
            <person name="Laamanen P."/>
            <person name="Legros Y."/>
            <person name="Louis E.J."/>
            <person name="Moeller-Rieker S."/>
            <person name="Monnet A."/>
            <person name="Moro M."/>
            <person name="Mueller-Auer S."/>
            <person name="Nussbaumer B."/>
            <person name="Paricio N."/>
            <person name="Paulin L."/>
            <person name="Perea J."/>
            <person name="Perez-Alonso M."/>
            <person name="Perez-Ortin J.E."/>
            <person name="Pohl T.M."/>
            <person name="Prydz H."/>
            <person name="Purnelle B."/>
            <person name="Rasmussen S.W."/>
            <person name="Remacha M.A."/>
            <person name="Revuelta J.L."/>
            <person name="Rieger M."/>
            <person name="Salom D."/>
            <person name="Saluz H.P."/>
            <person name="Saiz J.E."/>
            <person name="Saren A.-M."/>
            <person name="Schaefer M."/>
            <person name="Scharfe M."/>
            <person name="Schmidt E.R."/>
            <person name="Schneider C."/>
            <person name="Scholler P."/>
            <person name="Schwarz S."/>
            <person name="Soler-Mira A."/>
            <person name="Urrestarazu L.A."/>
            <person name="Verhasselt P."/>
            <person name="Vissers S."/>
            <person name="Voet M."/>
            <person name="Volckaert G."/>
            <person name="Wagner G."/>
            <person name="Wambutt R."/>
            <person name="Wedler E."/>
            <person name="Wedler H."/>
            <person name="Woelfl S."/>
            <person name="Harris D.E."/>
            <person name="Bowman S."/>
            <person name="Brown D."/>
            <person name="Churcher C.M."/>
            <person name="Connor R."/>
            <person name="Dedman K."/>
            <person name="Gentles S."/>
            <person name="Hamlin N."/>
            <person name="Hunt S."/>
            <person name="Jones L."/>
            <person name="McDonald S."/>
            <person name="Murphy L.D."/>
            <person name="Niblett D."/>
            <person name="Odell C."/>
            <person name="Oliver K."/>
            <person name="Rajandream M.A."/>
            <person name="Richards C."/>
            <person name="Shore L."/>
            <person name="Walsh S.V."/>
            <person name="Barrell B.G."/>
            <person name="Dietrich F.S."/>
            <person name="Mulligan J.T."/>
            <person name="Allen E."/>
            <person name="Araujo R."/>
            <person name="Aviles E."/>
            <person name="Berno A."/>
            <person name="Carpenter J."/>
            <person name="Chen E."/>
            <person name="Cherry J.M."/>
            <person name="Chung E."/>
            <person name="Duncan M."/>
            <person name="Hunicke-Smith S."/>
            <person name="Hyman R.W."/>
            <person name="Komp C."/>
            <person name="Lashkari D."/>
            <person name="Lew H."/>
            <person name="Lin D."/>
            <person name="Mosedale D."/>
            <person name="Nakahara K."/>
            <person name="Namath A."/>
            <person name="Oefner P."/>
            <person name="Oh C."/>
            <person name="Petel F.X."/>
            <person name="Roberts D."/>
            <person name="Schramm S."/>
            <person name="Schroeder M."/>
            <person name="Shogren T."/>
            <person name="Shroff N."/>
            <person name="Winant A."/>
            <person name="Yelton M.A."/>
            <person name="Botstein D."/>
            <person name="Davis R.W."/>
            <person name="Johnston M."/>
            <person name="Andrews S."/>
            <person name="Brinkman R."/>
            <person name="Cooper J."/>
            <person name="Ding H."/>
            <person name="Du Z."/>
            <person name="Favello A."/>
            <person name="Fulton L."/>
            <person name="Gattung S."/>
            <person name="Greco T."/>
            <person name="Hallsworth K."/>
            <person name="Hawkins J."/>
            <person name="Hillier L.W."/>
            <person name="Jier M."/>
            <person name="Johnson D."/>
            <person name="Johnston L."/>
            <person name="Kirsten J."/>
            <person name="Kucaba T."/>
            <person name="Langston Y."/>
            <person name="Latreille P."/>
            <person name="Le T."/>
            <person name="Mardis E."/>
            <person name="Menezes S."/>
            <person name="Miller N."/>
            <person name="Nhan M."/>
            <person name="Pauley A."/>
            <person name="Peluso D."/>
            <person name="Rifkin L."/>
            <person name="Riles L."/>
            <person name="Taich A."/>
            <person name="Trevaskis E."/>
            <person name="Vignati D."/>
            <person name="Wilcox L."/>
            <person name="Wohldman P."/>
            <person name="Vaudin M."/>
            <person name="Wilson R."/>
            <person name="Waterston R."/>
            <person name="Albermann K."/>
            <person name="Hani J."/>
            <person name="Heumann K."/>
            <person name="Kleine K."/>
            <person name="Mewes H.-W."/>
            <person name="Zollner A."/>
            <person name="Zaccaria P."/>
        </authorList>
    </citation>
    <scope>NUCLEOTIDE SEQUENCE [LARGE SCALE GENOMIC DNA]</scope>
    <source>
        <strain>ATCC 204508 / S288c</strain>
    </source>
</reference>
<reference key="3">
    <citation type="journal article" date="2014" name="G3 (Bethesda)">
        <title>The reference genome sequence of Saccharomyces cerevisiae: Then and now.</title>
        <authorList>
            <person name="Engel S.R."/>
            <person name="Dietrich F.S."/>
            <person name="Fisk D.G."/>
            <person name="Binkley G."/>
            <person name="Balakrishnan R."/>
            <person name="Costanzo M.C."/>
            <person name="Dwight S.S."/>
            <person name="Hitz B.C."/>
            <person name="Karra K."/>
            <person name="Nash R.S."/>
            <person name="Weng S."/>
            <person name="Wong E.D."/>
            <person name="Lloyd P."/>
            <person name="Skrzypek M.S."/>
            <person name="Miyasato S.R."/>
            <person name="Simison M."/>
            <person name="Cherry J.M."/>
        </authorList>
    </citation>
    <scope>GENOME REANNOTATION</scope>
    <source>
        <strain>ATCC 204508 / S288c</strain>
    </source>
</reference>
<name>KNH1_YEAST</name>
<organism>
    <name type="scientific">Saccharomyces cerevisiae (strain ATCC 204508 / S288c)</name>
    <name type="common">Baker's yeast</name>
    <dbReference type="NCBI Taxonomy" id="559292"/>
    <lineage>
        <taxon>Eukaryota</taxon>
        <taxon>Fungi</taxon>
        <taxon>Dikarya</taxon>
        <taxon>Ascomycota</taxon>
        <taxon>Saccharomycotina</taxon>
        <taxon>Saccharomycetes</taxon>
        <taxon>Saccharomycetales</taxon>
        <taxon>Saccharomycetaceae</taxon>
        <taxon>Saccharomyces</taxon>
    </lineage>
</organism>
<accession>P50112</accession>
<accession>D6VRU6</accession>
<accession>Q07354</accession>